<gene>
    <name type="primary">EIL2</name>
    <name type="ordered locus">At5g21120</name>
    <name type="ORF">T10F18.150</name>
</gene>
<comment type="function">
    <text evidence="4 5">Probable transcription factor acting as a positive regulator in the ethylene response pathway. Could bind the primary ethylene response element present in the ETHYLENE-RESPONSE-FACTOR1 promoter.</text>
</comment>
<comment type="subunit">
    <text evidence="1">Acts as a homodimer to bind the primary ethylene response element.</text>
</comment>
<comment type="subcellular location">
    <subcellularLocation>
        <location evidence="1">Nucleus</location>
    </subcellularLocation>
</comment>
<comment type="similarity">
    <text evidence="6">Belongs to the EIN3 family.</text>
</comment>
<keyword id="KW-0010">Activator</keyword>
<keyword id="KW-0175">Coiled coil</keyword>
<keyword id="KW-0238">DNA-binding</keyword>
<keyword id="KW-0936">Ethylene signaling pathway</keyword>
<keyword id="KW-0539">Nucleus</keyword>
<keyword id="KW-1185">Reference proteome</keyword>
<keyword id="KW-0804">Transcription</keyword>
<keyword id="KW-0805">Transcription regulation</keyword>
<feature type="chain" id="PRO_0000113500" description="ETHYLENE INSENSITIVE 3-like 2 protein">
    <location>
        <begin position="1"/>
        <end position="518"/>
    </location>
</feature>
<feature type="region of interest" description="Disordered" evidence="3">
    <location>
        <begin position="450"/>
        <end position="518"/>
    </location>
</feature>
<feature type="coiled-coil region" evidence="2">
    <location>
        <begin position="37"/>
        <end position="73"/>
    </location>
</feature>
<feature type="compositionally biased region" description="Polar residues" evidence="3">
    <location>
        <begin position="475"/>
        <end position="484"/>
    </location>
</feature>
<feature type="compositionally biased region" description="Polar residues" evidence="3">
    <location>
        <begin position="500"/>
        <end position="518"/>
    </location>
</feature>
<dbReference type="EMBL" id="AF004214">
    <property type="protein sequence ID" value="AAC49747.1"/>
    <property type="molecule type" value="mRNA"/>
</dbReference>
<dbReference type="EMBL" id="AC140977">
    <property type="protein sequence ID" value="AAO73887.1"/>
    <property type="molecule type" value="Genomic_DNA"/>
</dbReference>
<dbReference type="EMBL" id="CP002688">
    <property type="protein sequence ID" value="AED92936.1"/>
    <property type="molecule type" value="Genomic_DNA"/>
</dbReference>
<dbReference type="EMBL" id="CP002688">
    <property type="protein sequence ID" value="ANM70600.1"/>
    <property type="molecule type" value="Genomic_DNA"/>
</dbReference>
<dbReference type="RefSeq" id="NP_001318615.1">
    <property type="nucleotide sequence ID" value="NM_001343697.1"/>
</dbReference>
<dbReference type="RefSeq" id="NP_197611.1">
    <property type="nucleotide sequence ID" value="NM_122120.2"/>
</dbReference>
<dbReference type="SMR" id="O23115"/>
<dbReference type="BioGRID" id="17512">
    <property type="interactions" value="31"/>
</dbReference>
<dbReference type="FunCoup" id="O23115">
    <property type="interactions" value="364"/>
</dbReference>
<dbReference type="IntAct" id="O23115">
    <property type="interactions" value="30"/>
</dbReference>
<dbReference type="STRING" id="3702.O23115"/>
<dbReference type="iPTMnet" id="O23115"/>
<dbReference type="PaxDb" id="3702-AT5G21120.1"/>
<dbReference type="ProteomicsDB" id="220443"/>
<dbReference type="EnsemblPlants" id="AT5G21120.1">
    <property type="protein sequence ID" value="AT5G21120.1"/>
    <property type="gene ID" value="AT5G21120"/>
</dbReference>
<dbReference type="EnsemblPlants" id="AT5G21120.3">
    <property type="protein sequence ID" value="AT5G21120.3"/>
    <property type="gene ID" value="AT5G21120"/>
</dbReference>
<dbReference type="GeneID" id="832237"/>
<dbReference type="Gramene" id="AT5G21120.1">
    <property type="protein sequence ID" value="AT5G21120.1"/>
    <property type="gene ID" value="AT5G21120"/>
</dbReference>
<dbReference type="Gramene" id="AT5G21120.3">
    <property type="protein sequence ID" value="AT5G21120.3"/>
    <property type="gene ID" value="AT5G21120"/>
</dbReference>
<dbReference type="KEGG" id="ath:AT5G21120"/>
<dbReference type="Araport" id="AT5G21120"/>
<dbReference type="TAIR" id="AT5G21120">
    <property type="gene designation" value="EIL2"/>
</dbReference>
<dbReference type="eggNOG" id="ENOG502QQSG">
    <property type="taxonomic scope" value="Eukaryota"/>
</dbReference>
<dbReference type="HOGENOM" id="CLU_027306_2_0_1"/>
<dbReference type="InParanoid" id="O23115"/>
<dbReference type="OrthoDB" id="1107084at2759"/>
<dbReference type="PhylomeDB" id="O23115"/>
<dbReference type="PRO" id="PR:O23115"/>
<dbReference type="Proteomes" id="UP000006548">
    <property type="component" value="Chromosome 5"/>
</dbReference>
<dbReference type="ExpressionAtlas" id="O23115">
    <property type="expression patterns" value="baseline and differential"/>
</dbReference>
<dbReference type="GO" id="GO:0005634">
    <property type="term" value="C:nucleus"/>
    <property type="evidence" value="ECO:0007669"/>
    <property type="project" value="UniProtKB-SubCell"/>
</dbReference>
<dbReference type="GO" id="GO:0003677">
    <property type="term" value="F:DNA binding"/>
    <property type="evidence" value="ECO:0007669"/>
    <property type="project" value="UniProtKB-KW"/>
</dbReference>
<dbReference type="GO" id="GO:0003700">
    <property type="term" value="F:DNA-binding transcription factor activity"/>
    <property type="evidence" value="ECO:0000250"/>
    <property type="project" value="TAIR"/>
</dbReference>
<dbReference type="GO" id="GO:0009873">
    <property type="term" value="P:ethylene-activated signaling pathway"/>
    <property type="evidence" value="ECO:0007669"/>
    <property type="project" value="UniProtKB-KW"/>
</dbReference>
<dbReference type="FunFam" id="1.10.3180.10:FF:000001">
    <property type="entry name" value="Ethylene insensitive 3-like 1"/>
    <property type="match status" value="1"/>
</dbReference>
<dbReference type="Gene3D" id="1.10.3180.10">
    <property type="entry name" value="DNA-binding domain of EIN3-like"/>
    <property type="match status" value="1"/>
</dbReference>
<dbReference type="InterPro" id="IPR006957">
    <property type="entry name" value="EIN3"/>
</dbReference>
<dbReference type="InterPro" id="IPR047091">
    <property type="entry name" value="EIN3-like_DNA-bd"/>
</dbReference>
<dbReference type="InterPro" id="IPR023278">
    <property type="entry name" value="Ethylene_insens-like_DNA-bd"/>
</dbReference>
<dbReference type="PANTHER" id="PTHR33305">
    <property type="entry name" value="ETHYLENE INSENSITIVE 3-LIKE 2 PROTEIN"/>
    <property type="match status" value="1"/>
</dbReference>
<dbReference type="PANTHER" id="PTHR33305:SF51">
    <property type="entry name" value="ETHYLENE INSENSITIVE 3-LIKE 2 PROTEIN"/>
    <property type="match status" value="1"/>
</dbReference>
<dbReference type="Pfam" id="PF04873">
    <property type="entry name" value="EIN3_DNA-bd"/>
    <property type="match status" value="1"/>
</dbReference>
<dbReference type="SUPFAM" id="SSF116768">
    <property type="entry name" value="DNA-binding domain of EIN3-like"/>
    <property type="match status" value="1"/>
</dbReference>
<organism>
    <name type="scientific">Arabidopsis thaliana</name>
    <name type="common">Mouse-ear cress</name>
    <dbReference type="NCBI Taxonomy" id="3702"/>
    <lineage>
        <taxon>Eukaryota</taxon>
        <taxon>Viridiplantae</taxon>
        <taxon>Streptophyta</taxon>
        <taxon>Embryophyta</taxon>
        <taxon>Tracheophyta</taxon>
        <taxon>Spermatophyta</taxon>
        <taxon>Magnoliopsida</taxon>
        <taxon>eudicotyledons</taxon>
        <taxon>Gunneridae</taxon>
        <taxon>Pentapetalae</taxon>
        <taxon>rosids</taxon>
        <taxon>malvids</taxon>
        <taxon>Brassicales</taxon>
        <taxon>Brassicaceae</taxon>
        <taxon>Camelineae</taxon>
        <taxon>Arabidopsis</taxon>
    </lineage>
</organism>
<protein>
    <recommendedName>
        <fullName>ETHYLENE INSENSITIVE 3-like 2 protein</fullName>
    </recommendedName>
</protein>
<proteinExistence type="evidence at protein level"/>
<name>EIL2_ARATH</name>
<reference key="1">
    <citation type="journal article" date="1997" name="Cell">
        <title>Activation of the ethylene gas response pathway in Arabidopsis by the nuclear protein ETHYLENE-INSENSITIVE3 and related proteins.</title>
        <authorList>
            <person name="Chao Q."/>
            <person name="Rothenberg M."/>
            <person name="Solano R."/>
            <person name="Roman G."/>
            <person name="Terzaghi W."/>
            <person name="Ecker J.R."/>
        </authorList>
    </citation>
    <scope>NUCLEOTIDE SEQUENCE [MRNA]</scope>
    <scope>FUNCTION</scope>
    <source>
        <strain>cv. Columbia</strain>
    </source>
</reference>
<reference key="2">
    <citation type="journal article" date="2000" name="Nature">
        <title>Sequence and analysis of chromosome 5 of the plant Arabidopsis thaliana.</title>
        <authorList>
            <person name="Tabata S."/>
            <person name="Kaneko T."/>
            <person name="Nakamura Y."/>
            <person name="Kotani H."/>
            <person name="Kato T."/>
            <person name="Asamizu E."/>
            <person name="Miyajima N."/>
            <person name="Sasamoto S."/>
            <person name="Kimura T."/>
            <person name="Hosouchi T."/>
            <person name="Kawashima K."/>
            <person name="Kohara M."/>
            <person name="Matsumoto M."/>
            <person name="Matsuno A."/>
            <person name="Muraki A."/>
            <person name="Nakayama S."/>
            <person name="Nakazaki N."/>
            <person name="Naruo K."/>
            <person name="Okumura S."/>
            <person name="Shinpo S."/>
            <person name="Takeuchi C."/>
            <person name="Wada T."/>
            <person name="Watanabe A."/>
            <person name="Yamada M."/>
            <person name="Yasuda M."/>
            <person name="Sato S."/>
            <person name="de la Bastide M."/>
            <person name="Huang E."/>
            <person name="Spiegel L."/>
            <person name="Gnoj L."/>
            <person name="O'Shaughnessy A."/>
            <person name="Preston R."/>
            <person name="Habermann K."/>
            <person name="Murray J."/>
            <person name="Johnson D."/>
            <person name="Rohlfing T."/>
            <person name="Nelson J."/>
            <person name="Stoneking T."/>
            <person name="Pepin K."/>
            <person name="Spieth J."/>
            <person name="Sekhon M."/>
            <person name="Armstrong J."/>
            <person name="Becker M."/>
            <person name="Belter E."/>
            <person name="Cordum H."/>
            <person name="Cordes M."/>
            <person name="Courtney L."/>
            <person name="Courtney W."/>
            <person name="Dante M."/>
            <person name="Du H."/>
            <person name="Edwards J."/>
            <person name="Fryman J."/>
            <person name="Haakensen B."/>
            <person name="Lamar E."/>
            <person name="Latreille P."/>
            <person name="Leonard S."/>
            <person name="Meyer R."/>
            <person name="Mulvaney E."/>
            <person name="Ozersky P."/>
            <person name="Riley A."/>
            <person name="Strowmatt C."/>
            <person name="Wagner-McPherson C."/>
            <person name="Wollam A."/>
            <person name="Yoakum M."/>
            <person name="Bell M."/>
            <person name="Dedhia N."/>
            <person name="Parnell L."/>
            <person name="Shah R."/>
            <person name="Rodriguez M."/>
            <person name="Hoon See L."/>
            <person name="Vil D."/>
            <person name="Baker J."/>
            <person name="Kirchoff K."/>
            <person name="Toth K."/>
            <person name="King L."/>
            <person name="Bahret A."/>
            <person name="Miller B."/>
            <person name="Marra M.A."/>
            <person name="Martienssen R."/>
            <person name="McCombie W.R."/>
            <person name="Wilson R.K."/>
            <person name="Murphy G."/>
            <person name="Bancroft I."/>
            <person name="Volckaert G."/>
            <person name="Wambutt R."/>
            <person name="Duesterhoeft A."/>
            <person name="Stiekema W."/>
            <person name="Pohl T."/>
            <person name="Entian K.-D."/>
            <person name="Terryn N."/>
            <person name="Hartley N."/>
            <person name="Bent E."/>
            <person name="Johnson S."/>
            <person name="Langham S.-A."/>
            <person name="McCullagh B."/>
            <person name="Robben J."/>
            <person name="Grymonprez B."/>
            <person name="Zimmermann W."/>
            <person name="Ramsperger U."/>
            <person name="Wedler H."/>
            <person name="Balke K."/>
            <person name="Wedler E."/>
            <person name="Peters S."/>
            <person name="van Staveren M."/>
            <person name="Dirkse W."/>
            <person name="Mooijman P."/>
            <person name="Klein Lankhorst R."/>
            <person name="Weitzenegger T."/>
            <person name="Bothe G."/>
            <person name="Rose M."/>
            <person name="Hauf J."/>
            <person name="Berneiser S."/>
            <person name="Hempel S."/>
            <person name="Feldpausch M."/>
            <person name="Lamberth S."/>
            <person name="Villarroel R."/>
            <person name="Gielen J."/>
            <person name="Ardiles W."/>
            <person name="Bents O."/>
            <person name="Lemcke K."/>
            <person name="Kolesov G."/>
            <person name="Mayer K.F.X."/>
            <person name="Rudd S."/>
            <person name="Schoof H."/>
            <person name="Schueller C."/>
            <person name="Zaccaria P."/>
            <person name="Mewes H.-W."/>
            <person name="Bevan M."/>
            <person name="Fransz P.F."/>
        </authorList>
    </citation>
    <scope>NUCLEOTIDE SEQUENCE [LARGE SCALE GENOMIC DNA]</scope>
    <source>
        <strain>cv. Columbia</strain>
    </source>
</reference>
<reference key="3">
    <citation type="journal article" date="2017" name="Plant J.">
        <title>Araport11: a complete reannotation of the Arabidopsis thaliana reference genome.</title>
        <authorList>
            <person name="Cheng C.Y."/>
            <person name="Krishnakumar V."/>
            <person name="Chan A.P."/>
            <person name="Thibaud-Nissen F."/>
            <person name="Schobel S."/>
            <person name="Town C.D."/>
        </authorList>
    </citation>
    <scope>GENOME REANNOTATION</scope>
    <source>
        <strain>cv. Columbia</strain>
    </source>
</reference>
<reference key="4">
    <citation type="journal article" date="1998" name="Genes Dev.">
        <title>Nuclear events in ethylene signaling: a transcriptional cascade mediated by ETHYLENE-INSENSITIVE3 and ETHYLENE-RESPONSE-FACTOR1.</title>
        <authorList>
            <person name="Solano R."/>
            <person name="Stepanova A.N."/>
            <person name="Chao Q."/>
            <person name="Ecker J.R."/>
        </authorList>
    </citation>
    <scope>CHARACTERIZATION</scope>
    <scope>FUNCTION</scope>
</reference>
<reference key="5">
    <citation type="journal article" date="2003" name="Proc. Natl. Acad. Sci. U.S.A.">
        <title>Five components of the ethylene-response pathway identified in a screen for weak ethylene-insensitive mutants in Arabidopsis.</title>
        <authorList>
            <person name="Alonso J.M."/>
            <person name="Stepanova A.N."/>
            <person name="Solano R."/>
            <person name="Wisman E."/>
            <person name="Ferrari S."/>
            <person name="Ausubel F.M."/>
            <person name="Ecker J.R."/>
        </authorList>
    </citation>
    <scope>CHARACTERIZATION</scope>
</reference>
<sequence length="518" mass="59186">MDMYNNNIGMFRSLVCSSAPPFTEGHMCSDSHTALCDDLSSDEEMEIEELEKKIWRDKQRLKRLKEMAKNGLGTRLLLKQQHDDFPEHSSKRTMYKAQDGILKYMSKTMERYKAQGFVYGIVLENGKTVAGSSDNLREWWKDKVRFDRNGPAAIIKHQRDINLSDGSDSGSEVGDSTAQKLLELQDTTLGALLSALFPHCNPPQRRFPLEKGVTPPWWPTGKEDWWDQLSLPVDFRGVPPPYKKPHDLKKLWKIGVLIGVIRHMASDISNIPNLVRRSRSLQEKMTSREGALWLAALYREKAIVDQIAMSRENNNTSNFLVPATGGDPDVLFPESTDYDVELIGGTHRTNQQYPEFENNYNCVYKRKFEEDFGMPMHPTLLTCENSLCPYSQPHMGFLDRNLRENHQMTCPYKVTSFYQPTKPYGMTGLMVPCPDYNGMQQQVQSFQDQFNHPNDLYRPKAPQRGNDDLVEDLNPSPSTLNQNLGLVLPTDFNGGEETVGTENNLHNQGQELPTSWIQ</sequence>
<evidence type="ECO:0000250" key="1"/>
<evidence type="ECO:0000255" key="2"/>
<evidence type="ECO:0000256" key="3">
    <source>
        <dbReference type="SAM" id="MobiDB-lite"/>
    </source>
</evidence>
<evidence type="ECO:0000269" key="4">
    <source>
    </source>
</evidence>
<evidence type="ECO:0000269" key="5">
    <source>
    </source>
</evidence>
<evidence type="ECO:0000305" key="6"/>
<accession>O23115</accession>